<proteinExistence type="inferred from homology"/>
<organism>
    <name type="scientific">Shewanella amazonensis (strain ATCC BAA-1098 / SB2B)</name>
    <dbReference type="NCBI Taxonomy" id="326297"/>
    <lineage>
        <taxon>Bacteria</taxon>
        <taxon>Pseudomonadati</taxon>
        <taxon>Pseudomonadota</taxon>
        <taxon>Gammaproteobacteria</taxon>
        <taxon>Alteromonadales</taxon>
        <taxon>Shewanellaceae</taxon>
        <taxon>Shewanella</taxon>
    </lineage>
</organism>
<comment type="function">
    <text evidence="2">Transaldolase is important for the balance of metabolites in the pentose-phosphate pathway.</text>
</comment>
<comment type="catalytic activity">
    <reaction evidence="2">
        <text>D-sedoheptulose 7-phosphate + D-glyceraldehyde 3-phosphate = D-erythrose 4-phosphate + beta-D-fructose 6-phosphate</text>
        <dbReference type="Rhea" id="RHEA:17053"/>
        <dbReference type="ChEBI" id="CHEBI:16897"/>
        <dbReference type="ChEBI" id="CHEBI:57483"/>
        <dbReference type="ChEBI" id="CHEBI:57634"/>
        <dbReference type="ChEBI" id="CHEBI:59776"/>
        <dbReference type="EC" id="2.2.1.2"/>
    </reaction>
</comment>
<comment type="pathway">
    <text evidence="2">Carbohydrate degradation; pentose phosphate pathway; D-glyceraldehyde 3-phosphate and beta-D-fructose 6-phosphate from D-ribose 5-phosphate and D-xylulose 5-phosphate (non-oxidative stage): step 2/3.</text>
</comment>
<comment type="subunit">
    <text evidence="1">Homodimer.</text>
</comment>
<comment type="subcellular location">
    <subcellularLocation>
        <location evidence="2">Cytoplasm</location>
    </subcellularLocation>
</comment>
<comment type="similarity">
    <text evidence="2">Belongs to the transaldolase family. Type 1 subfamily.</text>
</comment>
<name>TAL_SHEAM</name>
<sequence>MANTLEQLKSFTTIVADTGDIEAIKRSQPEDATTNPSLILKAAQIPEYSGLIDNAIAWAKTQSDNLETQIEDAADKLAVNIGLEILKLVPGRISTEVDARLSFDKTASIAKAHKLIRLYQEAGIDKSRILIKLASTWEGICAAKELEAEGINCNLTLLFSFAQARACAEAGVFLISPFVGRILDWYKKSTGKDYRASEDPGVVSVTDIYNYYKRHGYKTVVMGASFRNTGEIIELAGCDRLTIGPSLLEEMAASNTPVVRKLTPTTDTVAPGPVMSEAEFRWEMNQDAMAVEKLAEGIRNFAIDQGKLEEMLKAKLA</sequence>
<protein>
    <recommendedName>
        <fullName evidence="2">Transaldolase</fullName>
        <ecNumber evidence="2">2.2.1.2</ecNumber>
    </recommendedName>
</protein>
<feature type="chain" id="PRO_1000014520" description="Transaldolase">
    <location>
        <begin position="1"/>
        <end position="317"/>
    </location>
</feature>
<feature type="active site" description="Schiff-base intermediate with substrate" evidence="2">
    <location>
        <position position="132"/>
    </location>
</feature>
<keyword id="KW-0963">Cytoplasm</keyword>
<keyword id="KW-0570">Pentose shunt</keyword>
<keyword id="KW-1185">Reference proteome</keyword>
<keyword id="KW-0704">Schiff base</keyword>
<keyword id="KW-0808">Transferase</keyword>
<gene>
    <name evidence="2" type="primary">tal</name>
    <name type="ordered locus">Sama_0913</name>
</gene>
<accession>A1S414</accession>
<reference key="1">
    <citation type="submission" date="2006-12" db="EMBL/GenBank/DDBJ databases">
        <title>Complete sequence of Shewanella amazonensis SB2B.</title>
        <authorList>
            <consortium name="US DOE Joint Genome Institute"/>
            <person name="Copeland A."/>
            <person name="Lucas S."/>
            <person name="Lapidus A."/>
            <person name="Barry K."/>
            <person name="Detter J.C."/>
            <person name="Glavina del Rio T."/>
            <person name="Hammon N."/>
            <person name="Israni S."/>
            <person name="Dalin E."/>
            <person name="Tice H."/>
            <person name="Pitluck S."/>
            <person name="Munk A.C."/>
            <person name="Brettin T."/>
            <person name="Bruce D."/>
            <person name="Han C."/>
            <person name="Tapia R."/>
            <person name="Gilna P."/>
            <person name="Schmutz J."/>
            <person name="Larimer F."/>
            <person name="Land M."/>
            <person name="Hauser L."/>
            <person name="Kyrpides N."/>
            <person name="Mikhailova N."/>
            <person name="Fredrickson J."/>
            <person name="Richardson P."/>
        </authorList>
    </citation>
    <scope>NUCLEOTIDE SEQUENCE [LARGE SCALE GENOMIC DNA]</scope>
    <source>
        <strain>ATCC BAA-1098 / SB2B</strain>
    </source>
</reference>
<evidence type="ECO:0000250" key="1"/>
<evidence type="ECO:0000255" key="2">
    <source>
        <dbReference type="HAMAP-Rule" id="MF_00492"/>
    </source>
</evidence>
<dbReference type="EC" id="2.2.1.2" evidence="2"/>
<dbReference type="EMBL" id="CP000507">
    <property type="protein sequence ID" value="ABL99120.1"/>
    <property type="molecule type" value="Genomic_DNA"/>
</dbReference>
<dbReference type="RefSeq" id="WP_011759030.1">
    <property type="nucleotide sequence ID" value="NC_008700.1"/>
</dbReference>
<dbReference type="SMR" id="A1S414"/>
<dbReference type="STRING" id="326297.Sama_0913"/>
<dbReference type="KEGG" id="saz:Sama_0913"/>
<dbReference type="eggNOG" id="COG0176">
    <property type="taxonomic scope" value="Bacteria"/>
</dbReference>
<dbReference type="HOGENOM" id="CLU_047470_0_1_6"/>
<dbReference type="OrthoDB" id="9809101at2"/>
<dbReference type="UniPathway" id="UPA00115">
    <property type="reaction ID" value="UER00414"/>
</dbReference>
<dbReference type="Proteomes" id="UP000009175">
    <property type="component" value="Chromosome"/>
</dbReference>
<dbReference type="GO" id="GO:0005829">
    <property type="term" value="C:cytosol"/>
    <property type="evidence" value="ECO:0007669"/>
    <property type="project" value="TreeGrafter"/>
</dbReference>
<dbReference type="GO" id="GO:0004801">
    <property type="term" value="F:transaldolase activity"/>
    <property type="evidence" value="ECO:0000250"/>
    <property type="project" value="UniProtKB"/>
</dbReference>
<dbReference type="GO" id="GO:0005975">
    <property type="term" value="P:carbohydrate metabolic process"/>
    <property type="evidence" value="ECO:0007669"/>
    <property type="project" value="InterPro"/>
</dbReference>
<dbReference type="GO" id="GO:0006098">
    <property type="term" value="P:pentose-phosphate shunt"/>
    <property type="evidence" value="ECO:0007669"/>
    <property type="project" value="UniProtKB-UniRule"/>
</dbReference>
<dbReference type="CDD" id="cd00957">
    <property type="entry name" value="Transaldolase_TalAB"/>
    <property type="match status" value="1"/>
</dbReference>
<dbReference type="FunFam" id="3.20.20.70:FF:000002">
    <property type="entry name" value="Transaldolase"/>
    <property type="match status" value="1"/>
</dbReference>
<dbReference type="Gene3D" id="3.20.20.70">
    <property type="entry name" value="Aldolase class I"/>
    <property type="match status" value="1"/>
</dbReference>
<dbReference type="HAMAP" id="MF_00492">
    <property type="entry name" value="Transaldolase_1"/>
    <property type="match status" value="1"/>
</dbReference>
<dbReference type="InterPro" id="IPR013785">
    <property type="entry name" value="Aldolase_TIM"/>
</dbReference>
<dbReference type="InterPro" id="IPR001585">
    <property type="entry name" value="TAL/FSA"/>
</dbReference>
<dbReference type="InterPro" id="IPR004730">
    <property type="entry name" value="Transaldolase_1"/>
</dbReference>
<dbReference type="InterPro" id="IPR018225">
    <property type="entry name" value="Transaldolase_AS"/>
</dbReference>
<dbReference type="NCBIfam" id="NF009001">
    <property type="entry name" value="PRK12346.1"/>
    <property type="match status" value="1"/>
</dbReference>
<dbReference type="NCBIfam" id="TIGR00874">
    <property type="entry name" value="talAB"/>
    <property type="match status" value="1"/>
</dbReference>
<dbReference type="PANTHER" id="PTHR10683">
    <property type="entry name" value="TRANSALDOLASE"/>
    <property type="match status" value="1"/>
</dbReference>
<dbReference type="PANTHER" id="PTHR10683:SF18">
    <property type="entry name" value="TRANSALDOLASE"/>
    <property type="match status" value="1"/>
</dbReference>
<dbReference type="Pfam" id="PF00923">
    <property type="entry name" value="TAL_FSA"/>
    <property type="match status" value="1"/>
</dbReference>
<dbReference type="SUPFAM" id="SSF51569">
    <property type="entry name" value="Aldolase"/>
    <property type="match status" value="1"/>
</dbReference>
<dbReference type="PROSITE" id="PS01054">
    <property type="entry name" value="TRANSALDOLASE_1"/>
    <property type="match status" value="1"/>
</dbReference>
<dbReference type="PROSITE" id="PS00958">
    <property type="entry name" value="TRANSALDOLASE_2"/>
    <property type="match status" value="1"/>
</dbReference>